<evidence type="ECO:0000250" key="1"/>
<evidence type="ECO:0000255" key="2"/>
<evidence type="ECO:0000305" key="3"/>
<name>NLTPC_ARATH</name>
<gene>
    <name type="primary">LTP12</name>
    <name type="ordered locus">At3g51590</name>
    <name type="ORF">F26O13.230</name>
    <name type="ORF">T18N14.1</name>
</gene>
<proteinExistence type="inferred from homology"/>
<feature type="signal peptide" evidence="2">
    <location>
        <begin position="1"/>
        <end position="24"/>
    </location>
</feature>
<feature type="chain" id="PRO_0000355621" description="Non-specific lipid-transfer protein 12">
    <location>
        <begin position="25"/>
        <end position="119"/>
    </location>
</feature>
<feature type="disulfide bond" evidence="2">
    <location>
        <begin position="28"/>
        <end position="75"/>
    </location>
</feature>
<feature type="disulfide bond" evidence="2">
    <location>
        <begin position="38"/>
        <end position="52"/>
    </location>
</feature>
<feature type="disulfide bond" evidence="2">
    <location>
        <begin position="53"/>
        <end position="98"/>
    </location>
</feature>
<feature type="disulfide bond" evidence="2">
    <location>
        <begin position="73"/>
        <end position="112"/>
    </location>
</feature>
<feature type="sequence conflict" description="In Ref. 5; AAM64852." evidence="3" ref="5">
    <original>A</original>
    <variation>T</variation>
    <location>
        <position position="19"/>
    </location>
</feature>
<feature type="sequence conflict" description="In Ref. 5; AAM64852." evidence="3" ref="5">
    <original>L</original>
    <variation>V</variation>
    <location>
        <position position="39"/>
    </location>
</feature>
<organism>
    <name type="scientific">Arabidopsis thaliana</name>
    <name type="common">Mouse-ear cress</name>
    <dbReference type="NCBI Taxonomy" id="3702"/>
    <lineage>
        <taxon>Eukaryota</taxon>
        <taxon>Viridiplantae</taxon>
        <taxon>Streptophyta</taxon>
        <taxon>Embryophyta</taxon>
        <taxon>Tracheophyta</taxon>
        <taxon>Spermatophyta</taxon>
        <taxon>Magnoliopsida</taxon>
        <taxon>eudicotyledons</taxon>
        <taxon>Gunneridae</taxon>
        <taxon>Pentapetalae</taxon>
        <taxon>rosids</taxon>
        <taxon>malvids</taxon>
        <taxon>Brassicales</taxon>
        <taxon>Brassicaceae</taxon>
        <taxon>Camelineae</taxon>
        <taxon>Arabidopsis</taxon>
    </lineage>
</organism>
<keyword id="KW-1015">Disulfide bond</keyword>
<keyword id="KW-0446">Lipid-binding</keyword>
<keyword id="KW-1185">Reference proteome</keyword>
<keyword id="KW-0732">Signal</keyword>
<keyword id="KW-0813">Transport</keyword>
<dbReference type="EMBL" id="AL133452">
    <property type="protein sequence ID" value="CAB63023.1"/>
    <property type="molecule type" value="Genomic_DNA"/>
</dbReference>
<dbReference type="EMBL" id="CP002686">
    <property type="protein sequence ID" value="AEE78810.1"/>
    <property type="molecule type" value="Genomic_DNA"/>
</dbReference>
<dbReference type="EMBL" id="DQ446756">
    <property type="protein sequence ID" value="ABE66008.1"/>
    <property type="molecule type" value="mRNA"/>
</dbReference>
<dbReference type="EMBL" id="DQ653145">
    <property type="protein sequence ID" value="ABK28596.1"/>
    <property type="status" value="ALT_SEQ"/>
    <property type="molecule type" value="mRNA"/>
</dbReference>
<dbReference type="EMBL" id="BT026083">
    <property type="protein sequence ID" value="ABG48439.1"/>
    <property type="molecule type" value="mRNA"/>
</dbReference>
<dbReference type="EMBL" id="AY087300">
    <property type="protein sequence ID" value="AAM64852.1"/>
    <property type="molecule type" value="mRNA"/>
</dbReference>
<dbReference type="PIR" id="T45790">
    <property type="entry name" value="T45790"/>
</dbReference>
<dbReference type="RefSeq" id="NP_190727.1">
    <property type="nucleotide sequence ID" value="NM_115018.3"/>
</dbReference>
<dbReference type="SMR" id="Q9SCZ0"/>
<dbReference type="FunCoup" id="Q9SCZ0">
    <property type="interactions" value="3"/>
</dbReference>
<dbReference type="STRING" id="3702.Q9SCZ0"/>
<dbReference type="PaxDb" id="3702-AT3G51590.1"/>
<dbReference type="ProteomicsDB" id="251182"/>
<dbReference type="EnsemblPlants" id="AT3G51590.1">
    <property type="protein sequence ID" value="AT3G51590.1"/>
    <property type="gene ID" value="AT3G51590"/>
</dbReference>
<dbReference type="GeneID" id="824322"/>
<dbReference type="Gramene" id="AT3G51590.1">
    <property type="protein sequence ID" value="AT3G51590.1"/>
    <property type="gene ID" value="AT3G51590"/>
</dbReference>
<dbReference type="KEGG" id="ath:AT3G51590"/>
<dbReference type="Araport" id="AT3G51590"/>
<dbReference type="TAIR" id="AT3G51590">
    <property type="gene designation" value="LTP12"/>
</dbReference>
<dbReference type="HOGENOM" id="CLU_128423_0_0_1"/>
<dbReference type="InParanoid" id="Q9SCZ0"/>
<dbReference type="OMA" id="SAMAMEM"/>
<dbReference type="PhylomeDB" id="Q9SCZ0"/>
<dbReference type="PRO" id="PR:Q9SCZ0"/>
<dbReference type="Proteomes" id="UP000006548">
    <property type="component" value="Chromosome 3"/>
</dbReference>
<dbReference type="ExpressionAtlas" id="Q9SCZ0">
    <property type="expression patterns" value="baseline and differential"/>
</dbReference>
<dbReference type="GO" id="GO:0009505">
    <property type="term" value="C:plant-type cell wall"/>
    <property type="evidence" value="ECO:0000250"/>
    <property type="project" value="TAIR"/>
</dbReference>
<dbReference type="GO" id="GO:0008289">
    <property type="term" value="F:lipid binding"/>
    <property type="evidence" value="ECO:0007669"/>
    <property type="project" value="UniProtKB-KW"/>
</dbReference>
<dbReference type="GO" id="GO:0006869">
    <property type="term" value="P:lipid transport"/>
    <property type="evidence" value="ECO:0007669"/>
    <property type="project" value="InterPro"/>
</dbReference>
<dbReference type="CDD" id="cd01960">
    <property type="entry name" value="nsLTP1"/>
    <property type="match status" value="1"/>
</dbReference>
<dbReference type="FunFam" id="1.10.110.10:FF:000002">
    <property type="entry name" value="Non-specific lipid-transfer protein"/>
    <property type="match status" value="1"/>
</dbReference>
<dbReference type="Gene3D" id="1.10.110.10">
    <property type="entry name" value="Plant lipid-transfer and hydrophobic proteins"/>
    <property type="match status" value="1"/>
</dbReference>
<dbReference type="InterPro" id="IPR036312">
    <property type="entry name" value="Bifun_inhib/LTP/seed_sf"/>
</dbReference>
<dbReference type="InterPro" id="IPR016140">
    <property type="entry name" value="Bifunc_inhib/LTP/seed_store"/>
</dbReference>
<dbReference type="InterPro" id="IPR000528">
    <property type="entry name" value="Plant_nsLTP"/>
</dbReference>
<dbReference type="PANTHER" id="PTHR33076">
    <property type="entry name" value="NON-SPECIFIC LIPID-TRANSFER PROTEIN 2-RELATED"/>
    <property type="match status" value="1"/>
</dbReference>
<dbReference type="Pfam" id="PF00234">
    <property type="entry name" value="Tryp_alpha_amyl"/>
    <property type="match status" value="1"/>
</dbReference>
<dbReference type="PRINTS" id="PR00382">
    <property type="entry name" value="LIPIDTRNSFER"/>
</dbReference>
<dbReference type="SMART" id="SM00499">
    <property type="entry name" value="AAI"/>
    <property type="match status" value="1"/>
</dbReference>
<dbReference type="SUPFAM" id="SSF47699">
    <property type="entry name" value="Bifunctional inhibitor/lipid-transfer protein/seed storage 2S albumin"/>
    <property type="match status" value="1"/>
</dbReference>
<dbReference type="PROSITE" id="PS00597">
    <property type="entry name" value="PLANT_LTP"/>
    <property type="match status" value="1"/>
</dbReference>
<reference key="1">
    <citation type="journal article" date="2000" name="Nature">
        <title>Sequence and analysis of chromosome 3 of the plant Arabidopsis thaliana.</title>
        <authorList>
            <person name="Salanoubat M."/>
            <person name="Lemcke K."/>
            <person name="Rieger M."/>
            <person name="Ansorge W."/>
            <person name="Unseld M."/>
            <person name="Fartmann B."/>
            <person name="Valle G."/>
            <person name="Bloecker H."/>
            <person name="Perez-Alonso M."/>
            <person name="Obermaier B."/>
            <person name="Delseny M."/>
            <person name="Boutry M."/>
            <person name="Grivell L.A."/>
            <person name="Mache R."/>
            <person name="Puigdomenech P."/>
            <person name="De Simone V."/>
            <person name="Choisne N."/>
            <person name="Artiguenave F."/>
            <person name="Robert C."/>
            <person name="Brottier P."/>
            <person name="Wincker P."/>
            <person name="Cattolico L."/>
            <person name="Weissenbach J."/>
            <person name="Saurin W."/>
            <person name="Quetier F."/>
            <person name="Schaefer M."/>
            <person name="Mueller-Auer S."/>
            <person name="Gabel C."/>
            <person name="Fuchs M."/>
            <person name="Benes V."/>
            <person name="Wurmbach E."/>
            <person name="Drzonek H."/>
            <person name="Erfle H."/>
            <person name="Jordan N."/>
            <person name="Bangert S."/>
            <person name="Wiedelmann R."/>
            <person name="Kranz H."/>
            <person name="Voss H."/>
            <person name="Holland R."/>
            <person name="Brandt P."/>
            <person name="Nyakatura G."/>
            <person name="Vezzi A."/>
            <person name="D'Angelo M."/>
            <person name="Pallavicini A."/>
            <person name="Toppo S."/>
            <person name="Simionati B."/>
            <person name="Conrad A."/>
            <person name="Hornischer K."/>
            <person name="Kauer G."/>
            <person name="Loehnert T.-H."/>
            <person name="Nordsiek G."/>
            <person name="Reichelt J."/>
            <person name="Scharfe M."/>
            <person name="Schoen O."/>
            <person name="Bargues M."/>
            <person name="Terol J."/>
            <person name="Climent J."/>
            <person name="Navarro P."/>
            <person name="Collado C."/>
            <person name="Perez-Perez A."/>
            <person name="Ottenwaelder B."/>
            <person name="Duchemin D."/>
            <person name="Cooke R."/>
            <person name="Laudie M."/>
            <person name="Berger-Llauro C."/>
            <person name="Purnelle B."/>
            <person name="Masuy D."/>
            <person name="de Haan M."/>
            <person name="Maarse A.C."/>
            <person name="Alcaraz J.-P."/>
            <person name="Cottet A."/>
            <person name="Casacuberta E."/>
            <person name="Monfort A."/>
            <person name="Argiriou A."/>
            <person name="Flores M."/>
            <person name="Liguori R."/>
            <person name="Vitale D."/>
            <person name="Mannhaupt G."/>
            <person name="Haase D."/>
            <person name="Schoof H."/>
            <person name="Rudd S."/>
            <person name="Zaccaria P."/>
            <person name="Mewes H.-W."/>
            <person name="Mayer K.F.X."/>
            <person name="Kaul S."/>
            <person name="Town C.D."/>
            <person name="Koo H.L."/>
            <person name="Tallon L.J."/>
            <person name="Jenkins J."/>
            <person name="Rooney T."/>
            <person name="Rizzo M."/>
            <person name="Walts A."/>
            <person name="Utterback T."/>
            <person name="Fujii C.Y."/>
            <person name="Shea T.P."/>
            <person name="Creasy T.H."/>
            <person name="Haas B."/>
            <person name="Maiti R."/>
            <person name="Wu D."/>
            <person name="Peterson J."/>
            <person name="Van Aken S."/>
            <person name="Pai G."/>
            <person name="Militscher J."/>
            <person name="Sellers P."/>
            <person name="Gill J.E."/>
            <person name="Feldblyum T.V."/>
            <person name="Preuss D."/>
            <person name="Lin X."/>
            <person name="Nierman W.C."/>
            <person name="Salzberg S.L."/>
            <person name="White O."/>
            <person name="Venter J.C."/>
            <person name="Fraser C.M."/>
            <person name="Kaneko T."/>
            <person name="Nakamura Y."/>
            <person name="Sato S."/>
            <person name="Kato T."/>
            <person name="Asamizu E."/>
            <person name="Sasamoto S."/>
            <person name="Kimura T."/>
            <person name="Idesawa K."/>
            <person name="Kawashima K."/>
            <person name="Kishida Y."/>
            <person name="Kiyokawa C."/>
            <person name="Kohara M."/>
            <person name="Matsumoto M."/>
            <person name="Matsuno A."/>
            <person name="Muraki A."/>
            <person name="Nakayama S."/>
            <person name="Nakazaki N."/>
            <person name="Shinpo S."/>
            <person name="Takeuchi C."/>
            <person name="Wada T."/>
            <person name="Watanabe A."/>
            <person name="Yamada M."/>
            <person name="Yasuda M."/>
            <person name="Tabata S."/>
        </authorList>
    </citation>
    <scope>NUCLEOTIDE SEQUENCE [LARGE SCALE GENOMIC DNA]</scope>
    <source>
        <strain>cv. Columbia</strain>
    </source>
</reference>
<reference key="2">
    <citation type="journal article" date="2017" name="Plant J.">
        <title>Araport11: a complete reannotation of the Arabidopsis thaliana reference genome.</title>
        <authorList>
            <person name="Cheng C.Y."/>
            <person name="Krishnakumar V."/>
            <person name="Chan A.P."/>
            <person name="Thibaud-Nissen F."/>
            <person name="Schobel S."/>
            <person name="Town C.D."/>
        </authorList>
    </citation>
    <scope>GENOME REANNOTATION</scope>
    <source>
        <strain>cv. Columbia</strain>
    </source>
</reference>
<reference key="3">
    <citation type="journal article" date="2006" name="Plant Biotechnol. J.">
        <title>Simultaneous high-throughput recombinational cloning of open reading frames in closed and open configurations.</title>
        <authorList>
            <person name="Underwood B.A."/>
            <person name="Vanderhaeghen R."/>
            <person name="Whitford R."/>
            <person name="Town C.D."/>
            <person name="Hilson P."/>
        </authorList>
    </citation>
    <scope>NUCLEOTIDE SEQUENCE [LARGE SCALE MRNA]</scope>
    <source>
        <strain>cv. Columbia</strain>
    </source>
</reference>
<reference key="4">
    <citation type="submission" date="2006-07" db="EMBL/GenBank/DDBJ databases">
        <title>Arabidopsis ORF clones.</title>
        <authorList>
            <person name="Quinitio C."/>
            <person name="Chen H."/>
            <person name="Kim C.J."/>
            <person name="Shinn P."/>
            <person name="Ecker J.R."/>
        </authorList>
    </citation>
    <scope>NUCLEOTIDE SEQUENCE [LARGE SCALE MRNA]</scope>
    <source>
        <strain>cv. Columbia</strain>
    </source>
</reference>
<reference key="5">
    <citation type="submission" date="2002-03" db="EMBL/GenBank/DDBJ databases">
        <title>Full-length cDNA from Arabidopsis thaliana.</title>
        <authorList>
            <person name="Brover V.V."/>
            <person name="Troukhan M.E."/>
            <person name="Alexandrov N.A."/>
            <person name="Lu Y.-P."/>
            <person name="Flavell R.B."/>
            <person name="Feldmann K.A."/>
        </authorList>
    </citation>
    <scope>NUCLEOTIDE SEQUENCE [LARGE SCALE MRNA]</scope>
</reference>
<reference key="6">
    <citation type="journal article" date="2008" name="Plant Physiol. Biochem.">
        <title>Plant pathogenesis-related (PR) proteins: a focus on PR peptides.</title>
        <authorList>
            <person name="Sels J."/>
            <person name="Mathys J."/>
            <person name="De Coninck B.M.A."/>
            <person name="Cammue B.P.A."/>
            <person name="De Bolle M.F.C."/>
        </authorList>
    </citation>
    <scope>GENE FAMILY</scope>
    <scope>NOMENCLATURE</scope>
</reference>
<sequence>MAFTPKIITCLIVLTIYMASPTESTIQCGTVTSTLAQCLTYLTNSGPLPSQCCVGVKSLYQLAQTTPDRKQVCECLKLAGKEIKGLNTDLVAALPTTCGVSIPYPISFSTNCDSISTAV</sequence>
<comment type="function">
    <text evidence="1">Plant non-specific lipid-transfer proteins transfer phospholipids as well as galactolipids across membranes. May play a role in wax or cutin deposition in the cell walls of expanding epidermal cells and certain secretory tissues (By similarity).</text>
</comment>
<comment type="similarity">
    <text evidence="3">Belongs to the plant LTP family.</text>
</comment>
<comment type="sequence caution" evidence="3">
    <conflict type="erroneous termination">
        <sequence resource="EMBL-CDS" id="ABK28596"/>
    </conflict>
    <text>Extended C-terminus.</text>
</comment>
<protein>
    <recommendedName>
        <fullName>Non-specific lipid-transfer protein 12</fullName>
        <shortName>LTP 12</shortName>
    </recommendedName>
</protein>
<accession>Q9SCZ0</accession>
<accession>A0MF21</accession>
<accession>Q8LBC1</accession>